<protein>
    <recommendedName>
        <fullName>Sorting nexin-19</fullName>
    </recommendedName>
</protein>
<dbReference type="EMBL" id="AF395843">
    <property type="protein sequence ID" value="AAK73124.1"/>
    <property type="molecule type" value="mRNA"/>
</dbReference>
<dbReference type="EMBL" id="D87443">
    <property type="protein sequence ID" value="BAA13384.2"/>
    <property type="status" value="ALT_INIT"/>
    <property type="molecule type" value="mRNA"/>
</dbReference>
<dbReference type="EMBL" id="AP000824">
    <property type="status" value="NOT_ANNOTATED_CDS"/>
    <property type="molecule type" value="Genomic_DNA"/>
</dbReference>
<dbReference type="EMBL" id="AP001093">
    <property type="status" value="NOT_ANNOTATED_CDS"/>
    <property type="molecule type" value="Genomic_DNA"/>
</dbReference>
<dbReference type="EMBL" id="BC031620">
    <property type="protein sequence ID" value="AAH31620.1"/>
    <property type="molecule type" value="mRNA"/>
</dbReference>
<dbReference type="CCDS" id="CCDS31721.1">
    <molecule id="Q92543-1"/>
</dbReference>
<dbReference type="CCDS" id="CCDS86261.1">
    <molecule id="Q92543-2"/>
</dbReference>
<dbReference type="RefSeq" id="NP_001334847.1">
    <property type="nucleotide sequence ID" value="NM_001347918.1"/>
</dbReference>
<dbReference type="RefSeq" id="NP_001334848.1">
    <property type="nucleotide sequence ID" value="NM_001347919.1"/>
</dbReference>
<dbReference type="RefSeq" id="NP_001334849.1">
    <property type="nucleotide sequence ID" value="NM_001347920.1"/>
</dbReference>
<dbReference type="RefSeq" id="NP_001334850.2">
    <molecule id="Q92543-2"/>
    <property type="nucleotide sequence ID" value="NM_001347921.2"/>
</dbReference>
<dbReference type="RefSeq" id="NP_001334851.1">
    <property type="nucleotide sequence ID" value="NM_001347922.1"/>
</dbReference>
<dbReference type="RefSeq" id="NP_001334852.1">
    <property type="nucleotide sequence ID" value="NM_001347923.1"/>
</dbReference>
<dbReference type="RefSeq" id="NP_001334853.1">
    <property type="nucleotide sequence ID" value="NM_001347924.1"/>
</dbReference>
<dbReference type="RefSeq" id="NP_001334854.1">
    <property type="nucleotide sequence ID" value="NM_001347925.1"/>
</dbReference>
<dbReference type="RefSeq" id="NP_001334855.1">
    <property type="nucleotide sequence ID" value="NM_001347926.1"/>
</dbReference>
<dbReference type="RefSeq" id="NP_001334856.1">
    <property type="nucleotide sequence ID" value="NM_001347927.1"/>
</dbReference>
<dbReference type="RefSeq" id="NP_055573.3">
    <molecule id="Q92543-1"/>
    <property type="nucleotide sequence ID" value="NM_014758.3"/>
</dbReference>
<dbReference type="SMR" id="Q92543"/>
<dbReference type="BioGRID" id="134476">
    <property type="interactions" value="74"/>
</dbReference>
<dbReference type="FunCoup" id="Q92543">
    <property type="interactions" value="2853"/>
</dbReference>
<dbReference type="IntAct" id="Q92543">
    <property type="interactions" value="18"/>
</dbReference>
<dbReference type="MINT" id="Q92543"/>
<dbReference type="STRING" id="9606.ENSP00000265909"/>
<dbReference type="TCDB" id="3.A.34.1.1">
    <property type="family name" value="the sorting nexins of the escrt complexes (sn-escrt)"/>
</dbReference>
<dbReference type="GlyCosmos" id="Q92543">
    <property type="glycosylation" value="2 sites, 1 glycan"/>
</dbReference>
<dbReference type="GlyGen" id="Q92543">
    <property type="glycosylation" value="2 sites, 1 O-linked glycan (2 sites)"/>
</dbReference>
<dbReference type="iPTMnet" id="Q92543"/>
<dbReference type="PhosphoSitePlus" id="Q92543"/>
<dbReference type="BioMuta" id="SNX19"/>
<dbReference type="DMDM" id="296452910"/>
<dbReference type="jPOST" id="Q92543"/>
<dbReference type="MassIVE" id="Q92543"/>
<dbReference type="PaxDb" id="9606-ENSP00000265909"/>
<dbReference type="PeptideAtlas" id="Q92543"/>
<dbReference type="ProteomicsDB" id="21412"/>
<dbReference type="ProteomicsDB" id="75304">
    <molecule id="Q92543-1"/>
</dbReference>
<dbReference type="Pumba" id="Q92543"/>
<dbReference type="Antibodypedia" id="2996">
    <property type="antibodies" value="96 antibodies from 26 providers"/>
</dbReference>
<dbReference type="DNASU" id="399979"/>
<dbReference type="Ensembl" id="ENST00000265909.9">
    <molecule id="Q92543-1"/>
    <property type="protein sequence ID" value="ENSP00000265909.4"/>
    <property type="gene ID" value="ENSG00000120451.11"/>
</dbReference>
<dbReference type="Ensembl" id="ENST00000533214.1">
    <molecule id="Q92543-2"/>
    <property type="protein sequence ID" value="ENSP00000435390.1"/>
    <property type="gene ID" value="ENSG00000120451.11"/>
</dbReference>
<dbReference type="GeneID" id="399979"/>
<dbReference type="KEGG" id="hsa:399979"/>
<dbReference type="MANE-Select" id="ENST00000265909.9">
    <property type="protein sequence ID" value="ENSP00000265909.4"/>
    <property type="RefSeq nucleotide sequence ID" value="NM_014758.3"/>
    <property type="RefSeq protein sequence ID" value="NP_055573.3"/>
</dbReference>
<dbReference type="UCSC" id="uc001qgk.5">
    <molecule id="Q92543-1"/>
    <property type="organism name" value="human"/>
</dbReference>
<dbReference type="AGR" id="HGNC:21532"/>
<dbReference type="CTD" id="399979"/>
<dbReference type="DisGeNET" id="399979"/>
<dbReference type="GeneCards" id="SNX19"/>
<dbReference type="HGNC" id="HGNC:21532">
    <property type="gene designation" value="SNX19"/>
</dbReference>
<dbReference type="HPA" id="ENSG00000120451">
    <property type="expression patterns" value="Low tissue specificity"/>
</dbReference>
<dbReference type="neXtProt" id="NX_Q92543"/>
<dbReference type="OpenTargets" id="ENSG00000120451"/>
<dbReference type="PharmGKB" id="PA134904352"/>
<dbReference type="VEuPathDB" id="HostDB:ENSG00000120451"/>
<dbReference type="eggNOG" id="ENOG502QQBH">
    <property type="taxonomic scope" value="Eukaryota"/>
</dbReference>
<dbReference type="GeneTree" id="ENSGT00950000182856"/>
<dbReference type="HOGENOM" id="CLU_012033_0_0_1"/>
<dbReference type="InParanoid" id="Q92543"/>
<dbReference type="OMA" id="CGQHLQS"/>
<dbReference type="OrthoDB" id="5582218at2759"/>
<dbReference type="PAN-GO" id="Q92543">
    <property type="GO annotations" value="3 GO annotations based on evolutionary models"/>
</dbReference>
<dbReference type="PhylomeDB" id="Q92543"/>
<dbReference type="TreeFam" id="TF324055"/>
<dbReference type="PathwayCommons" id="Q92543"/>
<dbReference type="SignaLink" id="Q92543"/>
<dbReference type="BioGRID-ORCS" id="399979">
    <property type="hits" value="13 hits in 1164 CRISPR screens"/>
</dbReference>
<dbReference type="ChiTaRS" id="SNX19">
    <property type="organism name" value="human"/>
</dbReference>
<dbReference type="GenomeRNAi" id="399979"/>
<dbReference type="Pharos" id="Q92543">
    <property type="development level" value="Tbio"/>
</dbReference>
<dbReference type="PRO" id="PR:Q92543"/>
<dbReference type="Proteomes" id="UP000005640">
    <property type="component" value="Chromosome 11"/>
</dbReference>
<dbReference type="RNAct" id="Q92543">
    <property type="molecule type" value="protein"/>
</dbReference>
<dbReference type="Bgee" id="ENSG00000120451">
    <property type="expression patterns" value="Expressed in stromal cell of endometrium and 206 other cell types or tissues"/>
</dbReference>
<dbReference type="ExpressionAtlas" id="Q92543">
    <property type="expression patterns" value="baseline and differential"/>
</dbReference>
<dbReference type="GO" id="GO:0005737">
    <property type="term" value="C:cytoplasm"/>
    <property type="evidence" value="ECO:0000314"/>
    <property type="project" value="GO_Central"/>
</dbReference>
<dbReference type="GO" id="GO:0031901">
    <property type="term" value="C:early endosome membrane"/>
    <property type="evidence" value="ECO:0007669"/>
    <property type="project" value="UniProtKB-SubCell"/>
</dbReference>
<dbReference type="GO" id="GO:0043231">
    <property type="term" value="C:intracellular membrane-bounded organelle"/>
    <property type="evidence" value="ECO:0000318"/>
    <property type="project" value="GO_Central"/>
</dbReference>
<dbReference type="GO" id="GO:0035091">
    <property type="term" value="F:phosphatidylinositol binding"/>
    <property type="evidence" value="ECO:0000318"/>
    <property type="project" value="GO_Central"/>
</dbReference>
<dbReference type="GO" id="GO:0032266">
    <property type="term" value="F:phosphatidylinositol-3-phosphate binding"/>
    <property type="evidence" value="ECO:0007669"/>
    <property type="project" value="Ensembl"/>
</dbReference>
<dbReference type="GO" id="GO:0002062">
    <property type="term" value="P:chondrocyte differentiation"/>
    <property type="evidence" value="ECO:0000315"/>
    <property type="project" value="GO_Central"/>
</dbReference>
<dbReference type="GO" id="GO:1990502">
    <property type="term" value="P:dense core granule maturation"/>
    <property type="evidence" value="ECO:0000316"/>
    <property type="project" value="GO_Central"/>
</dbReference>
<dbReference type="GO" id="GO:0051649">
    <property type="term" value="P:establishment of localization in cell"/>
    <property type="evidence" value="ECO:0007669"/>
    <property type="project" value="Ensembl"/>
</dbReference>
<dbReference type="GO" id="GO:0006887">
    <property type="term" value="P:exocytosis"/>
    <property type="evidence" value="ECO:0007669"/>
    <property type="project" value="UniProtKB-KW"/>
</dbReference>
<dbReference type="GO" id="GO:0030073">
    <property type="term" value="P:insulin secretion"/>
    <property type="evidence" value="ECO:0000316"/>
    <property type="project" value="GO_Central"/>
</dbReference>
<dbReference type="CDD" id="cd06893">
    <property type="entry name" value="PX_SNX19"/>
    <property type="match status" value="1"/>
</dbReference>
<dbReference type="FunFam" id="3.30.1520.10:FF:000019">
    <property type="entry name" value="Putative sorting nexin-19"/>
    <property type="match status" value="1"/>
</dbReference>
<dbReference type="Gene3D" id="3.30.1520.10">
    <property type="entry name" value="Phox-like domain"/>
    <property type="match status" value="1"/>
</dbReference>
<dbReference type="InterPro" id="IPR003114">
    <property type="entry name" value="Phox_assoc"/>
</dbReference>
<dbReference type="InterPro" id="IPR001683">
    <property type="entry name" value="PX_dom"/>
</dbReference>
<dbReference type="InterPro" id="IPR036871">
    <property type="entry name" value="PX_dom_sf"/>
</dbReference>
<dbReference type="InterPro" id="IPR037909">
    <property type="entry name" value="SNX19_PX"/>
</dbReference>
<dbReference type="InterPro" id="IPR013937">
    <property type="entry name" value="Sorting_nexin_C"/>
</dbReference>
<dbReference type="PANTHER" id="PTHR22775">
    <property type="entry name" value="SORTING NEXIN"/>
    <property type="match status" value="1"/>
</dbReference>
<dbReference type="PANTHER" id="PTHR22775:SF31">
    <property type="entry name" value="SORTING NEXIN-19"/>
    <property type="match status" value="1"/>
</dbReference>
<dbReference type="Pfam" id="PF08628">
    <property type="entry name" value="Nexin_C"/>
    <property type="match status" value="1"/>
</dbReference>
<dbReference type="Pfam" id="PF00787">
    <property type="entry name" value="PX"/>
    <property type="match status" value="1"/>
</dbReference>
<dbReference type="Pfam" id="PF02194">
    <property type="entry name" value="PXA"/>
    <property type="match status" value="1"/>
</dbReference>
<dbReference type="SMART" id="SM00312">
    <property type="entry name" value="PX"/>
    <property type="match status" value="1"/>
</dbReference>
<dbReference type="SMART" id="SM00313">
    <property type="entry name" value="PXA"/>
    <property type="match status" value="1"/>
</dbReference>
<dbReference type="SUPFAM" id="SSF64268">
    <property type="entry name" value="PX domain"/>
    <property type="match status" value="1"/>
</dbReference>
<dbReference type="PROSITE" id="PS50195">
    <property type="entry name" value="PX"/>
    <property type="match status" value="1"/>
</dbReference>
<dbReference type="PROSITE" id="PS51207">
    <property type="entry name" value="PXA"/>
    <property type="match status" value="1"/>
</dbReference>
<evidence type="ECO:0000250" key="1">
    <source>
        <dbReference type="UniProtKB" id="Q6P4T1"/>
    </source>
</evidence>
<evidence type="ECO:0000255" key="2">
    <source>
        <dbReference type="PROSITE-ProRule" id="PRU00147"/>
    </source>
</evidence>
<evidence type="ECO:0000255" key="3">
    <source>
        <dbReference type="PROSITE-ProRule" id="PRU00553"/>
    </source>
</evidence>
<evidence type="ECO:0000256" key="4">
    <source>
        <dbReference type="SAM" id="MobiDB-lite"/>
    </source>
</evidence>
<evidence type="ECO:0000269" key="5">
    <source>
    </source>
</evidence>
<evidence type="ECO:0000269" key="6">
    <source>
    </source>
</evidence>
<evidence type="ECO:0000269" key="7">
    <source>
    </source>
</evidence>
<evidence type="ECO:0000269" key="8">
    <source>
    </source>
</evidence>
<evidence type="ECO:0000269" key="9">
    <source ref="1"/>
</evidence>
<evidence type="ECO:0000303" key="10">
    <source>
    </source>
</evidence>
<evidence type="ECO:0000305" key="11"/>
<feature type="chain" id="PRO_0000213868" description="Sorting nexin-19">
    <location>
        <begin position="1"/>
        <end position="992"/>
    </location>
</feature>
<feature type="domain" description="PXA" evidence="2 3">
    <location>
        <begin position="95"/>
        <end position="272"/>
    </location>
</feature>
<feature type="domain" description="PX" evidence="2">
    <location>
        <begin position="533"/>
        <end position="663"/>
    </location>
</feature>
<feature type="region of interest" description="Disordered" evidence="4">
    <location>
        <begin position="410"/>
        <end position="442"/>
    </location>
</feature>
<feature type="region of interest" description="Disordered" evidence="4">
    <location>
        <begin position="692"/>
        <end position="726"/>
    </location>
</feature>
<feature type="region of interest" description="Disordered" evidence="4">
    <location>
        <begin position="778"/>
        <end position="797"/>
    </location>
</feature>
<feature type="region of interest" description="Disordered" evidence="4">
    <location>
        <begin position="973"/>
        <end position="992"/>
    </location>
</feature>
<feature type="compositionally biased region" description="Acidic residues" evidence="4">
    <location>
        <begin position="418"/>
        <end position="428"/>
    </location>
</feature>
<feature type="compositionally biased region" description="Basic and acidic residues" evidence="4">
    <location>
        <begin position="709"/>
        <end position="719"/>
    </location>
</feature>
<feature type="compositionally biased region" description="Basic and acidic residues" evidence="4">
    <location>
        <begin position="782"/>
        <end position="795"/>
    </location>
</feature>
<feature type="compositionally biased region" description="Polar residues" evidence="4">
    <location>
        <begin position="980"/>
        <end position="992"/>
    </location>
</feature>
<feature type="binding site" evidence="1">
    <location>
        <position position="582"/>
    </location>
    <ligand>
        <name>a 1,2-diacyl-sn-glycero-3-phospho-(1D-myo-inositol-3-phosphate)</name>
        <dbReference type="ChEBI" id="CHEBI:58088"/>
    </ligand>
</feature>
<feature type="binding site" evidence="1">
    <location>
        <position position="629"/>
    </location>
    <ligand>
        <name>a 1,2-diacyl-sn-glycero-3-phospho-(1D-myo-inositol-3-phosphate)</name>
        <dbReference type="ChEBI" id="CHEBI:58088"/>
    </ligand>
</feature>
<feature type="splice variant" id="VSP_057153" description="In isoform 2." evidence="10">
    <location>
        <begin position="755"/>
        <end position="771"/>
    </location>
</feature>
<feature type="splice variant" id="VSP_057154" description="In isoform 2." evidence="10">
    <original>GTETEL</original>
    <variation>AEHAMC</variation>
    <location>
        <begin position="815"/>
        <end position="820"/>
    </location>
</feature>
<feature type="splice variant" id="VSP_057155" description="In isoform 2." evidence="10">
    <location>
        <begin position="821"/>
        <end position="992"/>
    </location>
</feature>
<feature type="sequence variant" id="VAR_060288" description="In dbSNP:rs3751037." evidence="5 8 9">
    <original>V</original>
    <variation>L</variation>
    <location>
        <position position="361"/>
    </location>
</feature>
<feature type="sequence variant" id="VAR_060289" description="In dbSNP:rs1050081.">
    <original>D</original>
    <variation>E</variation>
    <location>
        <position position="396"/>
    </location>
</feature>
<feature type="sequence variant" id="VAR_057334" description="In dbSNP:rs3190345.">
    <original>S</original>
    <variation>G</variation>
    <location>
        <position position="407"/>
    </location>
</feature>
<feature type="sequence variant" id="VAR_060290" description="In dbSNP:rs681982." evidence="5 8 9">
    <original>L</original>
    <variation>F</variation>
    <location>
        <position position="618"/>
    </location>
</feature>
<feature type="sequence variant" id="VAR_060291" description="In dbSNP:rs4414223." evidence="5 8 9">
    <original>N</original>
    <variation>S</variation>
    <location>
        <position position="753"/>
    </location>
</feature>
<feature type="sequence variant" id="VAR_060292" description="In dbSNP:rs2298566." evidence="8 9">
    <original>L</original>
    <variation>R</variation>
    <location>
        <position position="878"/>
    </location>
</feature>
<keyword id="KW-0025">Alternative splicing</keyword>
<keyword id="KW-0968">Cytoplasmic vesicle</keyword>
<keyword id="KW-0967">Endosome</keyword>
<keyword id="KW-0268">Exocytosis</keyword>
<keyword id="KW-0446">Lipid-binding</keyword>
<keyword id="KW-0472">Membrane</keyword>
<keyword id="KW-0653">Protein transport</keyword>
<keyword id="KW-1267">Proteomics identification</keyword>
<keyword id="KW-1185">Reference proteome</keyword>
<keyword id="KW-0813">Transport</keyword>
<comment type="function">
    <text evidence="1 7">Plays a role in intracellular vesicle trafficking and exocytosis (PubMed:24843546). May play a role in maintaining insulin-containing dense core vesicles in pancreatic beta-cells and in preventing their degradation. May play a role in insulin secretion (PubMed:24843546). Interacts with membranes containing phosphatidylinositol 3-phosphate (PtdIns(3P)) (By similarity).</text>
</comment>
<comment type="subunit">
    <text evidence="6">Interacts with PTPRN.</text>
</comment>
<comment type="interaction">
    <interactant intactId="EBI-728232">
        <id>Q92543</id>
    </interactant>
    <interactant intactId="EBI-728153">
        <id>Q16849</id>
        <label>PTPRN</label>
    </interactant>
    <organismsDiffer>false</organismsDiffer>
    <experiments>4</experiments>
</comment>
<comment type="subcellular location">
    <subcellularLocation>
        <location evidence="1">Early endosome membrane</location>
        <topology evidence="1">Peripheral membrane protein</topology>
        <orientation evidence="1">Cytoplasmic side</orientation>
    </subcellularLocation>
    <subcellularLocation>
        <location evidence="11">Cytoplasmic vesicle membrane</location>
        <topology evidence="11">Peripheral membrane protein</topology>
        <orientation evidence="11">Cytoplasmic side</orientation>
    </subcellularLocation>
</comment>
<comment type="alternative products">
    <event type="alternative splicing"/>
    <isoform>
        <id>Q92543-1</id>
        <name>1</name>
        <sequence type="displayed"/>
    </isoform>
    <isoform>
        <id>Q92543-2</id>
        <name>2</name>
        <sequence type="described" ref="VSP_057153 VSP_057154 VSP_057155"/>
    </isoform>
</comment>
<comment type="domain">
    <text evidence="1">The PX domain mediates specific binding to membranes enriched in phosphatidylinositol 3-phosphate (PtdIns(P3)).</text>
</comment>
<comment type="similarity">
    <text evidence="11">Belongs to the sorting nexin family.</text>
</comment>
<comment type="sequence caution" evidence="11">
    <conflict type="erroneous initiation">
        <sequence resource="EMBL-CDS" id="BAA13384"/>
    </conflict>
    <text>Extended N-terminus.</text>
</comment>
<name>SNX19_HUMAN</name>
<organism>
    <name type="scientific">Homo sapiens</name>
    <name type="common">Human</name>
    <dbReference type="NCBI Taxonomy" id="9606"/>
    <lineage>
        <taxon>Eukaryota</taxon>
        <taxon>Metazoa</taxon>
        <taxon>Chordata</taxon>
        <taxon>Craniata</taxon>
        <taxon>Vertebrata</taxon>
        <taxon>Euteleostomi</taxon>
        <taxon>Mammalia</taxon>
        <taxon>Eutheria</taxon>
        <taxon>Euarchontoglires</taxon>
        <taxon>Primates</taxon>
        <taxon>Haplorrhini</taxon>
        <taxon>Catarrhini</taxon>
        <taxon>Hominidae</taxon>
        <taxon>Homo</taxon>
    </lineage>
</organism>
<proteinExistence type="evidence at protein level"/>
<sequence length="992" mass="108598">MKTETVPPFQETPAGSSCHLNNLLSSRKLMAVGVLLGWLLVIHLLVNVWLLCLLSALLVVLGGWLGSSLAGVASGRLHLERFIPLATCPPCPEAERQLEREINRTIQMIIRDFVLSWYRSVSQEPAFEEEMEAAMKGLVQELRRRMSVMDSHAVAQSVLTLCGCHLQSYIQAKEATAGKNGPVEPSHLWEAYCRATAPHPAVHSPSAEVTYTRGVVNLLLQGLVPKPHLETRTGRHVVVELITCNVILPLISRLSDPDWIHLVLVGIFSKARDPAPCPASAPEQPSVPTSLPLIAEVEQLPEGRASPVAAPVFLSYSEPEGSAGPSPEVEEGHEAVEGDLGGMCEERKVGNNSSHFLQPNVRGPLFLCEDSELESPLSELGKETIMLMTPGSFLSDRIQDALCALESSQALEPKDGEASEGAEAEEGPGTETETGLPVSTLNSCPEIHIDTADKEIEQGDVTASVTALLEGPEKTCPSRPSCLEKDLTNDVSSLDPTLPPVLLSSSPPGPLSSATFSFEPLSSPDGPVIIQNLRITGTITAREHSGTGFHPYTLYTVKYETALDGENSSGLQQLAYHTVNRRYREFLNLQTRLEEKPDLRKFIKNVKGPKKLFPDLPLGNMDSDRVEARKSLLESFLKQLCAIPEIANSEEVQEFLALNTDARIAFVKKPFMVSRIDKMVVSAIVDTLKTAFPRSEPQSPTEELSEAETESKPQTEGKKASKSRLRFSSSKISPALSVTEAQDKILYCLQEGNVESETLSMSAMESFIEKQTKLLEMQPTKAPEKDPEQPPKGRVDSCVSDAAVPAQDPSNSDPGTETELADTALDLLLLLLTEQWKWLCTENMQKFLRLIFGTLVQRWLEVQVANLTSPQRWVQYLLLLQESIWPGGVLPKFPRPVRTQEQKLAAEKQALQSLMGVLPDLVVEILGVNKCRLSWGLVLESLQQPLINRHLIYCLGDIILEFLDLSASVEESAATTSASDTPGNSKRMGVSS</sequence>
<reference key="1">
    <citation type="submission" date="2001-06" db="EMBL/GenBank/DDBJ databases">
        <title>Kiaa0254 as a new member (SNX19) of sorting nexin family.</title>
        <authorList>
            <person name="Hong W."/>
        </authorList>
    </citation>
    <scope>NUCLEOTIDE SEQUENCE [MRNA] (ISOFORM 1)</scope>
    <scope>VARIANTS LEU-361; PHE-618; SER-753 AND ARG-878</scope>
</reference>
<reference key="2">
    <citation type="journal article" date="1996" name="DNA Res.">
        <title>Prediction of the coding sequences of unidentified human genes. VI. The coding sequences of 80 new genes (KIAA0201-KIAA0280) deduced by analysis of cDNA clones from cell line KG-1 and brain.</title>
        <authorList>
            <person name="Nagase T."/>
            <person name="Seki N."/>
            <person name="Ishikawa K."/>
            <person name="Ohira M."/>
            <person name="Kawarabayasi Y."/>
            <person name="Ohara O."/>
            <person name="Tanaka A."/>
            <person name="Kotani H."/>
            <person name="Miyajima N."/>
            <person name="Nomura N."/>
        </authorList>
    </citation>
    <scope>NUCLEOTIDE SEQUENCE [LARGE SCALE MRNA] (ISOFORM 1)</scope>
    <scope>VARIANTS LEU-361; PHE-618; SER-753 AND ARG-878</scope>
    <source>
        <tissue>Bone marrow</tissue>
    </source>
</reference>
<reference key="3">
    <citation type="journal article" date="2004" name="Genome Res.">
        <title>The status, quality, and expansion of the NIH full-length cDNA project: the Mammalian Gene Collection (MGC).</title>
        <authorList>
            <consortium name="The MGC Project Team"/>
        </authorList>
    </citation>
    <scope>NUCLEOTIDE SEQUENCE [LARGE SCALE MRNA] (ISOFORM 2)</scope>
    <scope>VARIANTS LEU-361; PHE-618 AND SER-753</scope>
    <source>
        <tissue>Brain</tissue>
    </source>
</reference>
<reference key="4">
    <citation type="journal article" date="2006" name="Nature">
        <title>Human chromosome 11 DNA sequence and analysis including novel gene identification.</title>
        <authorList>
            <person name="Taylor T.D."/>
            <person name="Noguchi H."/>
            <person name="Totoki Y."/>
            <person name="Toyoda A."/>
            <person name="Kuroki Y."/>
            <person name="Dewar K."/>
            <person name="Lloyd C."/>
            <person name="Itoh T."/>
            <person name="Takeda T."/>
            <person name="Kim D.-W."/>
            <person name="She X."/>
            <person name="Barlow K.F."/>
            <person name="Bloom T."/>
            <person name="Bruford E."/>
            <person name="Chang J.L."/>
            <person name="Cuomo C.A."/>
            <person name="Eichler E."/>
            <person name="FitzGerald M.G."/>
            <person name="Jaffe D.B."/>
            <person name="LaButti K."/>
            <person name="Nicol R."/>
            <person name="Park H.-S."/>
            <person name="Seaman C."/>
            <person name="Sougnez C."/>
            <person name="Yang X."/>
            <person name="Zimmer A.R."/>
            <person name="Zody M.C."/>
            <person name="Birren B.W."/>
            <person name="Nusbaum C."/>
            <person name="Fujiyama A."/>
            <person name="Hattori M."/>
            <person name="Rogers J."/>
            <person name="Lander E.S."/>
            <person name="Sakaki Y."/>
        </authorList>
    </citation>
    <scope>NUCLEOTIDE SEQUENCE [LARGE SCALE GENOMIC DNA]</scope>
</reference>
<reference key="5">
    <citation type="journal article" date="2005" name="Diabetologia">
        <title>The IA-2 interactome.</title>
        <authorList>
            <person name="Hu Y.F."/>
            <person name="Zhang H.L."/>
            <person name="Cai T."/>
            <person name="Harashima S."/>
            <person name="Notkins A.L."/>
        </authorList>
    </citation>
    <scope>INTERACTION WITH PTPRN</scope>
</reference>
<reference key="6">
    <citation type="journal article" date="2012" name="J. Diabetes Investig.">
        <title>Sorting nexin 19 regulates the number of dense core vesicles in pancreatic beta-cells.</title>
        <authorList>
            <person name="Harashima S."/>
            <person name="Horiuchi T."/>
            <person name="Wang Y."/>
            <person name="Notkins A.L."/>
            <person name="Seino Y."/>
            <person name="Inagaki N."/>
        </authorList>
    </citation>
    <scope>FUNCTION</scope>
</reference>
<accession>Q92543</accession>
<accession>E9PKB9</accession>
<accession>Q8IV55</accession>
<gene>
    <name type="primary">SNX19</name>
    <name type="synonym">KIAA0254</name>
</gene>